<reference key="1">
    <citation type="journal article" date="2009" name="J. Bacteriol.">
        <title>Complete genome sequence and comparative genome analysis of enteropathogenic Escherichia coli O127:H6 strain E2348/69.</title>
        <authorList>
            <person name="Iguchi A."/>
            <person name="Thomson N.R."/>
            <person name="Ogura Y."/>
            <person name="Saunders D."/>
            <person name="Ooka T."/>
            <person name="Henderson I.R."/>
            <person name="Harris D."/>
            <person name="Asadulghani M."/>
            <person name="Kurokawa K."/>
            <person name="Dean P."/>
            <person name="Kenny B."/>
            <person name="Quail M.A."/>
            <person name="Thurston S."/>
            <person name="Dougan G."/>
            <person name="Hayashi T."/>
            <person name="Parkhill J."/>
            <person name="Frankel G."/>
        </authorList>
    </citation>
    <scope>NUCLEOTIDE SEQUENCE [LARGE SCALE GENOMIC DNA]</scope>
    <source>
        <strain>E2348/69 / EPEC</strain>
    </source>
</reference>
<proteinExistence type="inferred from homology"/>
<evidence type="ECO:0000255" key="1">
    <source>
        <dbReference type="HAMAP-Rule" id="MF_00735"/>
    </source>
</evidence>
<sequence>MPWIQLKLNTTGANAEDLSDALMEAGAVSITFQDTHDTPVFEPLPGETRLWGDTDVIGLFDAETDMNDVVAILENHPLLGAGFAHKIEQLEDKDWEREWMDNFHPMRFGERLWICPSWRDVPDENAVNVMLDPGLAFGTGTHPTTSLCLQWLDSLDLTGKTVIDFGCGSGILAIAALKLGAAKAIGIDIDPQAIQASRDNAERNGVSDRLELYLPKDQPEEMKADVVVANILAGPLRELAPLISVLPVSGGLLGLSGILASQAESVCEAYADSFALDPVVEKEEWCRITGRKN</sequence>
<comment type="function">
    <text evidence="1">Methylates ribosomal protein L11.</text>
</comment>
<comment type="catalytic activity">
    <reaction evidence="1">
        <text>L-lysyl-[protein] + 3 S-adenosyl-L-methionine = N(6),N(6),N(6)-trimethyl-L-lysyl-[protein] + 3 S-adenosyl-L-homocysteine + 3 H(+)</text>
        <dbReference type="Rhea" id="RHEA:54192"/>
        <dbReference type="Rhea" id="RHEA-COMP:9752"/>
        <dbReference type="Rhea" id="RHEA-COMP:13826"/>
        <dbReference type="ChEBI" id="CHEBI:15378"/>
        <dbReference type="ChEBI" id="CHEBI:29969"/>
        <dbReference type="ChEBI" id="CHEBI:57856"/>
        <dbReference type="ChEBI" id="CHEBI:59789"/>
        <dbReference type="ChEBI" id="CHEBI:61961"/>
    </reaction>
</comment>
<comment type="subcellular location">
    <subcellularLocation>
        <location evidence="1">Cytoplasm</location>
    </subcellularLocation>
</comment>
<comment type="similarity">
    <text evidence="1">Belongs to the methyltransferase superfamily. PrmA family.</text>
</comment>
<protein>
    <recommendedName>
        <fullName evidence="1">Ribosomal protein L11 methyltransferase</fullName>
        <shortName evidence="1">L11 Mtase</shortName>
        <ecNumber evidence="1">2.1.1.-</ecNumber>
    </recommendedName>
</protein>
<dbReference type="EC" id="2.1.1.-" evidence="1"/>
<dbReference type="EMBL" id="FM180568">
    <property type="protein sequence ID" value="CAS11077.1"/>
    <property type="molecule type" value="Genomic_DNA"/>
</dbReference>
<dbReference type="RefSeq" id="WP_001145827.1">
    <property type="nucleotide sequence ID" value="NC_011601.1"/>
</dbReference>
<dbReference type="SMR" id="B7UJZ0"/>
<dbReference type="GeneID" id="75206107"/>
<dbReference type="KEGG" id="ecg:E2348C_3529"/>
<dbReference type="HOGENOM" id="CLU_049382_4_1_6"/>
<dbReference type="Proteomes" id="UP000008205">
    <property type="component" value="Chromosome"/>
</dbReference>
<dbReference type="GO" id="GO:0005829">
    <property type="term" value="C:cytosol"/>
    <property type="evidence" value="ECO:0007669"/>
    <property type="project" value="TreeGrafter"/>
</dbReference>
<dbReference type="GO" id="GO:0016279">
    <property type="term" value="F:protein-lysine N-methyltransferase activity"/>
    <property type="evidence" value="ECO:0007669"/>
    <property type="project" value="RHEA"/>
</dbReference>
<dbReference type="GO" id="GO:0032259">
    <property type="term" value="P:methylation"/>
    <property type="evidence" value="ECO:0007669"/>
    <property type="project" value="UniProtKB-KW"/>
</dbReference>
<dbReference type="CDD" id="cd02440">
    <property type="entry name" value="AdoMet_MTases"/>
    <property type="match status" value="1"/>
</dbReference>
<dbReference type="FunFam" id="3.40.50.150:FF:000021">
    <property type="entry name" value="Ribosomal protein L11 methyltransferase"/>
    <property type="match status" value="1"/>
</dbReference>
<dbReference type="Gene3D" id="3.40.50.150">
    <property type="entry name" value="Vaccinia Virus protein VP39"/>
    <property type="match status" value="1"/>
</dbReference>
<dbReference type="HAMAP" id="MF_00735">
    <property type="entry name" value="Methyltr_PrmA"/>
    <property type="match status" value="1"/>
</dbReference>
<dbReference type="InterPro" id="IPR050078">
    <property type="entry name" value="Ribosomal_L11_MeTrfase_PrmA"/>
</dbReference>
<dbReference type="InterPro" id="IPR004498">
    <property type="entry name" value="Ribosomal_PrmA_MeTrfase"/>
</dbReference>
<dbReference type="InterPro" id="IPR029063">
    <property type="entry name" value="SAM-dependent_MTases_sf"/>
</dbReference>
<dbReference type="NCBIfam" id="TIGR00406">
    <property type="entry name" value="prmA"/>
    <property type="match status" value="1"/>
</dbReference>
<dbReference type="PANTHER" id="PTHR43648">
    <property type="entry name" value="ELECTRON TRANSFER FLAVOPROTEIN BETA SUBUNIT LYSINE METHYLTRANSFERASE"/>
    <property type="match status" value="1"/>
</dbReference>
<dbReference type="PANTHER" id="PTHR43648:SF1">
    <property type="entry name" value="ELECTRON TRANSFER FLAVOPROTEIN BETA SUBUNIT LYSINE METHYLTRANSFERASE"/>
    <property type="match status" value="1"/>
</dbReference>
<dbReference type="Pfam" id="PF06325">
    <property type="entry name" value="PrmA"/>
    <property type="match status" value="1"/>
</dbReference>
<dbReference type="PIRSF" id="PIRSF000401">
    <property type="entry name" value="RPL11_MTase"/>
    <property type="match status" value="1"/>
</dbReference>
<dbReference type="SUPFAM" id="SSF53335">
    <property type="entry name" value="S-adenosyl-L-methionine-dependent methyltransferases"/>
    <property type="match status" value="1"/>
</dbReference>
<organism>
    <name type="scientific">Escherichia coli O127:H6 (strain E2348/69 / EPEC)</name>
    <dbReference type="NCBI Taxonomy" id="574521"/>
    <lineage>
        <taxon>Bacteria</taxon>
        <taxon>Pseudomonadati</taxon>
        <taxon>Pseudomonadota</taxon>
        <taxon>Gammaproteobacteria</taxon>
        <taxon>Enterobacterales</taxon>
        <taxon>Enterobacteriaceae</taxon>
        <taxon>Escherichia</taxon>
    </lineage>
</organism>
<keyword id="KW-0963">Cytoplasm</keyword>
<keyword id="KW-0489">Methyltransferase</keyword>
<keyword id="KW-1185">Reference proteome</keyword>
<keyword id="KW-0949">S-adenosyl-L-methionine</keyword>
<keyword id="KW-0808">Transferase</keyword>
<accession>B7UJZ0</accession>
<gene>
    <name evidence="1" type="primary">prmA</name>
    <name type="ordered locus">E2348C_3529</name>
</gene>
<name>PRMA_ECO27</name>
<feature type="chain" id="PRO_1000192624" description="Ribosomal protein L11 methyltransferase">
    <location>
        <begin position="1"/>
        <end position="293"/>
    </location>
</feature>
<feature type="binding site" evidence="1">
    <location>
        <position position="145"/>
    </location>
    <ligand>
        <name>S-adenosyl-L-methionine</name>
        <dbReference type="ChEBI" id="CHEBI:59789"/>
    </ligand>
</feature>
<feature type="binding site" evidence="1">
    <location>
        <position position="166"/>
    </location>
    <ligand>
        <name>S-adenosyl-L-methionine</name>
        <dbReference type="ChEBI" id="CHEBI:59789"/>
    </ligand>
</feature>
<feature type="binding site" evidence="1">
    <location>
        <position position="188"/>
    </location>
    <ligand>
        <name>S-adenosyl-L-methionine</name>
        <dbReference type="ChEBI" id="CHEBI:59789"/>
    </ligand>
</feature>
<feature type="binding site" evidence="1">
    <location>
        <position position="230"/>
    </location>
    <ligand>
        <name>S-adenosyl-L-methionine</name>
        <dbReference type="ChEBI" id="CHEBI:59789"/>
    </ligand>
</feature>